<dbReference type="EMBL" id="M22128">
    <property type="protein sequence ID" value="AAA25623.1"/>
    <property type="molecule type" value="Genomic_DNA"/>
</dbReference>
<dbReference type="EMBL" id="M65067">
    <property type="protein sequence ID" value="AAA70299.1"/>
    <property type="molecule type" value="Genomic_DNA"/>
</dbReference>
<dbReference type="PIR" id="A31572">
    <property type="entry name" value="A31572"/>
</dbReference>
<dbReference type="PDB" id="1FVP">
    <property type="method" value="X-ray"/>
    <property type="resolution" value="2.70 A"/>
    <property type="chains" value="A/B=1-231"/>
</dbReference>
<dbReference type="PDBsum" id="1FVP"/>
<dbReference type="SMR" id="P12745"/>
<dbReference type="STRING" id="659.AYY26_10975"/>
<dbReference type="EvolutionaryTrace" id="P12745"/>
<dbReference type="GO" id="GO:0047646">
    <property type="term" value="F:alkanal monooxygenase (FMN-linked) activity"/>
    <property type="evidence" value="ECO:0007669"/>
    <property type="project" value="InterPro"/>
</dbReference>
<dbReference type="Gene3D" id="3.20.20.30">
    <property type="entry name" value="Luciferase-like domain"/>
    <property type="match status" value="1"/>
</dbReference>
<dbReference type="InterPro" id="IPR018235">
    <property type="entry name" value="Bacterial_luciferase_CS"/>
</dbReference>
<dbReference type="InterPro" id="IPR036661">
    <property type="entry name" value="Luciferase-like_sf"/>
</dbReference>
<dbReference type="InterPro" id="IPR002103">
    <property type="entry name" value="Luciferase_bac/NFP"/>
</dbReference>
<dbReference type="PRINTS" id="PR00089">
    <property type="entry name" value="LUCIFERASE"/>
</dbReference>
<dbReference type="SUPFAM" id="SSF51679">
    <property type="entry name" value="Bacterial luciferase-like"/>
    <property type="match status" value="1"/>
</dbReference>
<dbReference type="PROSITE" id="PS00494">
    <property type="entry name" value="BACTERIAL_LUCIFERASE"/>
    <property type="match status" value="1"/>
</dbReference>
<evidence type="ECO:0000305" key="1"/>
<evidence type="ECO:0007829" key="2">
    <source>
        <dbReference type="PDB" id="1FVP"/>
    </source>
</evidence>
<feature type="chain" id="PRO_0000220183" description="Non-fluorescent flavoprotein">
    <location>
        <begin position="1"/>
        <end position="231"/>
    </location>
</feature>
<feature type="strand" evidence="2">
    <location>
        <begin position="6"/>
        <end position="11"/>
    </location>
</feature>
<feature type="helix" evidence="2">
    <location>
        <begin position="23"/>
        <end position="38"/>
    </location>
</feature>
<feature type="strand" evidence="2">
    <location>
        <begin position="40"/>
        <end position="48"/>
    </location>
</feature>
<feature type="strand" evidence="2">
    <location>
        <begin position="65"/>
        <end position="68"/>
    </location>
</feature>
<feature type="strand" evidence="2">
    <location>
        <begin position="71"/>
        <end position="75"/>
    </location>
</feature>
<feature type="helix" evidence="2">
    <location>
        <begin position="80"/>
        <end position="87"/>
    </location>
</feature>
<feature type="strand" evidence="2">
    <location>
        <begin position="92"/>
        <end position="94"/>
    </location>
</feature>
<feature type="strand" evidence="2">
    <location>
        <begin position="96"/>
        <end position="98"/>
    </location>
</feature>
<feature type="helix" evidence="2">
    <location>
        <begin position="100"/>
        <end position="116"/>
    </location>
</feature>
<feature type="strand" evidence="2">
    <location>
        <begin position="126"/>
        <end position="130"/>
    </location>
</feature>
<feature type="helix" evidence="2">
    <location>
        <begin position="138"/>
        <end position="155"/>
    </location>
</feature>
<feature type="helix" evidence="2">
    <location>
        <begin position="166"/>
        <end position="171"/>
    </location>
</feature>
<feature type="strand" evidence="2">
    <location>
        <begin position="174"/>
        <end position="177"/>
    </location>
</feature>
<feature type="helix" evidence="2">
    <location>
        <begin position="178"/>
        <end position="190"/>
    </location>
</feature>
<feature type="turn" evidence="2">
    <location>
        <begin position="191"/>
        <end position="193"/>
    </location>
</feature>
<feature type="strand" evidence="2">
    <location>
        <begin position="195"/>
        <end position="199"/>
    </location>
</feature>
<feature type="helix" evidence="2">
    <location>
        <begin position="207"/>
        <end position="227"/>
    </location>
</feature>
<comment type="cofactor">
    <cofactor>
        <name>FMN</name>
        <dbReference type="ChEBI" id="CHEBI:58210"/>
    </cofactor>
    <text>Binds 2 FMN per subunit. Each FMN has a myristate attached. This flavin-fatty acid linkage is probably the result of an enzyme-catalyzed reaction, most likely the bioluminescence reaction itself.</text>
</comment>
<comment type="subunit">
    <text>Homodimer.</text>
</comment>
<comment type="similarity">
    <text evidence="1">Belongs to the bacterial luciferase oxidoreductase family.</text>
</comment>
<protein>
    <recommendedName>
        <fullName>Non-fluorescent flavoprotein</fullName>
        <shortName>NFP</shortName>
    </recommendedName>
    <alternativeName>
        <fullName>FP390</fullName>
    </alternativeName>
</protein>
<gene>
    <name type="primary">luxF</name>
</gene>
<name>LUXF_PHOPO</name>
<organism>
    <name type="scientific">Photobacterium phosphoreum</name>
    <dbReference type="NCBI Taxonomy" id="659"/>
    <lineage>
        <taxon>Bacteria</taxon>
        <taxon>Pseudomonadati</taxon>
        <taxon>Pseudomonadota</taxon>
        <taxon>Gammaproteobacteria</taxon>
        <taxon>Vibrionales</taxon>
        <taxon>Vibrionaceae</taxon>
        <taxon>Photobacterium</taxon>
    </lineage>
</organism>
<keyword id="KW-0002">3D-structure</keyword>
<keyword id="KW-0285">Flavoprotein</keyword>
<accession>P12745</accession>
<proteinExistence type="evidence at protein level"/>
<reference key="1">
    <citation type="journal article" date="1988" name="Biochem. Biophys. Res. Commun.">
        <title>A new lux gene in bioluminescent bacteria codes for a protein homologous to the bacterial luciferase subunits.</title>
        <authorList>
            <person name="Soly R.R."/>
            <person name="Mancini J.A."/>
            <person name="Ferri S.R."/>
            <person name="Boylan M."/>
            <person name="Meighen E.A."/>
        </authorList>
    </citation>
    <scope>NUCLEOTIDE SEQUENCE [GENOMIC DNA]</scope>
</reference>
<reference key="2">
    <citation type="journal article" date="1991" name="Biochem. Biophys. Res. Commun.">
        <title>Structure and properties of luciferase from Photobacterium phosphoreum.</title>
        <authorList>
            <person name="Ferri S.R."/>
            <person name="Soly R.R."/>
            <person name="Szittner R.B."/>
            <person name="Meighen E.A."/>
        </authorList>
    </citation>
    <scope>NUCLEOTIDE SEQUENCE [GENOMIC DNA] OF 1-12</scope>
</reference>
<reference key="3">
    <citation type="journal article" date="1991" name="J. Mol. Biol.">
        <title>Identification of the acyl transfer site of fatty acyl-protein synthetase from bioluminescent bacteria.</title>
        <authorList>
            <person name="Soly R.R."/>
            <person name="Meighen E.A."/>
        </authorList>
    </citation>
    <scope>NUCLEOTIDE SEQUENCE [GENOMIC DNA] OF 218-231</scope>
</reference>
<reference key="4">
    <citation type="journal article" date="1996" name="Acta Crystallogr. D">
        <title>Structure of flavoprotein FP390 from a luminescent bacterium Photobacterium phosphoreum refined at 2.7-A resolution.</title>
        <authorList>
            <person name="Kita A."/>
            <person name="Kasai S."/>
            <person name="Miyata M."/>
            <person name="Miki K."/>
        </authorList>
    </citation>
    <scope>X-RAY CRYSTALLOGRAPHY (2.7 ANGSTROMS)</scope>
</reference>
<sequence>MNKWNYGVFFVNFYNKGQQEPSKTMNNALETLRIIDEDTSIYDVINIDDHYLVKKDSEDKKLASFITLGEKLYVLATSENTVDIAAKYALPLVFKWDDINEERLKLLSFYNASASKYNKNIDLVRHQLMLHVNVNEAETVAKEELKLYIENYVACTQPSNFNGSIDSIIQSNVTGSYKDCLSYVANLAGKFDNTVDFLLCFESMQDQNKKKSVMIDLNNQVIKFRQDNNLI</sequence>